<sequence>MSTINTDTNETMPHVSVNAQYIKDLSLENPSAPSSLAALDQRPQIDLSLDINITNLSEENFYEVELNIEAIARNEKYKLFQIELKYAGVFNLINIDSEQHPVLLSVHCPAMIFPFARKIIASCTQDAGFQPLMIDPIDFGALYHKKMSEHQN</sequence>
<gene>
    <name evidence="1" type="primary">secB</name>
    <name type="ordered locus">RAF_ORF0096</name>
</gene>
<accession>C3PMB1</accession>
<evidence type="ECO:0000255" key="1">
    <source>
        <dbReference type="HAMAP-Rule" id="MF_00821"/>
    </source>
</evidence>
<keyword id="KW-0143">Chaperone</keyword>
<keyword id="KW-0963">Cytoplasm</keyword>
<keyword id="KW-0653">Protein transport</keyword>
<keyword id="KW-0811">Translocation</keyword>
<keyword id="KW-0813">Transport</keyword>
<dbReference type="EMBL" id="CP001612">
    <property type="protein sequence ID" value="ACP53071.1"/>
    <property type="molecule type" value="Genomic_DNA"/>
</dbReference>
<dbReference type="RefSeq" id="WP_012719366.1">
    <property type="nucleotide sequence ID" value="NC_012633.1"/>
</dbReference>
<dbReference type="SMR" id="C3PMB1"/>
<dbReference type="KEGG" id="raf:RAF_ORF0096"/>
<dbReference type="HOGENOM" id="CLU_111574_0_0_5"/>
<dbReference type="Proteomes" id="UP000002305">
    <property type="component" value="Chromosome"/>
</dbReference>
<dbReference type="GO" id="GO:0005737">
    <property type="term" value="C:cytoplasm"/>
    <property type="evidence" value="ECO:0007669"/>
    <property type="project" value="UniProtKB-SubCell"/>
</dbReference>
<dbReference type="GO" id="GO:0051082">
    <property type="term" value="F:unfolded protein binding"/>
    <property type="evidence" value="ECO:0007669"/>
    <property type="project" value="InterPro"/>
</dbReference>
<dbReference type="GO" id="GO:0006457">
    <property type="term" value="P:protein folding"/>
    <property type="evidence" value="ECO:0007669"/>
    <property type="project" value="UniProtKB-UniRule"/>
</dbReference>
<dbReference type="GO" id="GO:0051262">
    <property type="term" value="P:protein tetramerization"/>
    <property type="evidence" value="ECO:0007669"/>
    <property type="project" value="InterPro"/>
</dbReference>
<dbReference type="GO" id="GO:0015031">
    <property type="term" value="P:protein transport"/>
    <property type="evidence" value="ECO:0007669"/>
    <property type="project" value="UniProtKB-UniRule"/>
</dbReference>
<dbReference type="CDD" id="cd00557">
    <property type="entry name" value="Translocase_SecB"/>
    <property type="match status" value="1"/>
</dbReference>
<dbReference type="Gene3D" id="3.10.420.10">
    <property type="entry name" value="SecB-like"/>
    <property type="match status" value="1"/>
</dbReference>
<dbReference type="HAMAP" id="MF_00821">
    <property type="entry name" value="SecB"/>
    <property type="match status" value="1"/>
</dbReference>
<dbReference type="InterPro" id="IPR003708">
    <property type="entry name" value="SecB"/>
</dbReference>
<dbReference type="InterPro" id="IPR035958">
    <property type="entry name" value="SecB-like_sf"/>
</dbReference>
<dbReference type="NCBIfam" id="NF004392">
    <property type="entry name" value="PRK05751.1-3"/>
    <property type="match status" value="1"/>
</dbReference>
<dbReference type="NCBIfam" id="TIGR00809">
    <property type="entry name" value="secB"/>
    <property type="match status" value="1"/>
</dbReference>
<dbReference type="PANTHER" id="PTHR36918">
    <property type="match status" value="1"/>
</dbReference>
<dbReference type="PANTHER" id="PTHR36918:SF1">
    <property type="entry name" value="PROTEIN-EXPORT PROTEIN SECB"/>
    <property type="match status" value="1"/>
</dbReference>
<dbReference type="Pfam" id="PF02556">
    <property type="entry name" value="SecB"/>
    <property type="match status" value="1"/>
</dbReference>
<dbReference type="PRINTS" id="PR01594">
    <property type="entry name" value="SECBCHAPRONE"/>
</dbReference>
<dbReference type="SUPFAM" id="SSF54611">
    <property type="entry name" value="SecB-like"/>
    <property type="match status" value="1"/>
</dbReference>
<proteinExistence type="inferred from homology"/>
<reference key="1">
    <citation type="journal article" date="2009" name="BMC Genomics">
        <title>Analysis of the Rickettsia africae genome reveals that virulence acquisition in Rickettsia species may be explained by genome reduction.</title>
        <authorList>
            <person name="Fournier P.-E."/>
            <person name="El Karkouri K."/>
            <person name="Leroy Q."/>
            <person name="Robert C."/>
            <person name="Giumelli B."/>
            <person name="Renesto P."/>
            <person name="Socolovschi C."/>
            <person name="Parola P."/>
            <person name="Audic S."/>
            <person name="Raoult D."/>
        </authorList>
    </citation>
    <scope>NUCLEOTIDE SEQUENCE [LARGE SCALE GENOMIC DNA]</scope>
    <source>
        <strain>ESF-5</strain>
    </source>
</reference>
<protein>
    <recommendedName>
        <fullName evidence="1">Protein-export protein SecB</fullName>
    </recommendedName>
</protein>
<name>SECB_RICAE</name>
<feature type="chain" id="PRO_1000213109" description="Protein-export protein SecB">
    <location>
        <begin position="1"/>
        <end position="152"/>
    </location>
</feature>
<comment type="function">
    <text evidence="1">One of the proteins required for the normal export of preproteins out of the cell cytoplasm. It is a molecular chaperone that binds to a subset of precursor proteins, maintaining them in a translocation-competent state. It also specifically binds to its receptor SecA.</text>
</comment>
<comment type="subunit">
    <text evidence="1">Homotetramer, a dimer of dimers. One homotetramer interacts with 1 SecA dimer.</text>
</comment>
<comment type="subcellular location">
    <subcellularLocation>
        <location evidence="1">Cytoplasm</location>
    </subcellularLocation>
</comment>
<comment type="similarity">
    <text evidence="1">Belongs to the SecB family.</text>
</comment>
<organism>
    <name type="scientific">Rickettsia africae (strain ESF-5)</name>
    <dbReference type="NCBI Taxonomy" id="347255"/>
    <lineage>
        <taxon>Bacteria</taxon>
        <taxon>Pseudomonadati</taxon>
        <taxon>Pseudomonadota</taxon>
        <taxon>Alphaproteobacteria</taxon>
        <taxon>Rickettsiales</taxon>
        <taxon>Rickettsiaceae</taxon>
        <taxon>Rickettsieae</taxon>
        <taxon>Rickettsia</taxon>
        <taxon>spotted fever group</taxon>
    </lineage>
</organism>